<comment type="similarity">
    <text evidence="1">Belongs to the UPF0225 family.</text>
</comment>
<comment type="sequence caution" evidence="2">
    <conflict type="erroneous initiation">
        <sequence resource="EMBL-CDS" id="CAF21447"/>
    </conflict>
</comment>
<organism>
    <name type="scientific">Corynebacterium glutamicum (strain ATCC 13032 / DSM 20300 / JCM 1318 / BCRC 11384 / CCUG 27702 / LMG 3730 / NBRC 12168 / NCIMB 10025 / NRRL B-2784 / 534)</name>
    <dbReference type="NCBI Taxonomy" id="196627"/>
    <lineage>
        <taxon>Bacteria</taxon>
        <taxon>Bacillati</taxon>
        <taxon>Actinomycetota</taxon>
        <taxon>Actinomycetes</taxon>
        <taxon>Mycobacteriales</taxon>
        <taxon>Corynebacteriaceae</taxon>
        <taxon>Corynebacterium</taxon>
    </lineage>
</organism>
<name>Y1438_CORGL</name>
<proteinExistence type="inferred from homology"/>
<evidence type="ECO:0000255" key="1">
    <source>
        <dbReference type="HAMAP-Rule" id="MF_00612"/>
    </source>
</evidence>
<evidence type="ECO:0000305" key="2"/>
<reference key="1">
    <citation type="journal article" date="2003" name="Appl. Microbiol. Biotechnol.">
        <title>The Corynebacterium glutamicum genome: features and impacts on biotechnological processes.</title>
        <authorList>
            <person name="Ikeda M."/>
            <person name="Nakagawa S."/>
        </authorList>
    </citation>
    <scope>NUCLEOTIDE SEQUENCE [LARGE SCALE GENOMIC DNA]</scope>
    <source>
        <strain>ATCC 13032 / DSM 20300 / JCM 1318 / BCRC 11384 / CCUG 27702 / LMG 3730 / NBRC 12168 / NCIMB 10025 / NRRL B-2784 / 534</strain>
    </source>
</reference>
<reference key="2">
    <citation type="journal article" date="2003" name="J. Biotechnol.">
        <title>The complete Corynebacterium glutamicum ATCC 13032 genome sequence and its impact on the production of L-aspartate-derived amino acids and vitamins.</title>
        <authorList>
            <person name="Kalinowski J."/>
            <person name="Bathe B."/>
            <person name="Bartels D."/>
            <person name="Bischoff N."/>
            <person name="Bott M."/>
            <person name="Burkovski A."/>
            <person name="Dusch N."/>
            <person name="Eggeling L."/>
            <person name="Eikmanns B.J."/>
            <person name="Gaigalat L."/>
            <person name="Goesmann A."/>
            <person name="Hartmann M."/>
            <person name="Huthmacher K."/>
            <person name="Kraemer R."/>
            <person name="Linke B."/>
            <person name="McHardy A.C."/>
            <person name="Meyer F."/>
            <person name="Moeckel B."/>
            <person name="Pfefferle W."/>
            <person name="Puehler A."/>
            <person name="Rey D.A."/>
            <person name="Rueckert C."/>
            <person name="Rupp O."/>
            <person name="Sahm H."/>
            <person name="Wendisch V.F."/>
            <person name="Wiegraebe I."/>
            <person name="Tauch A."/>
        </authorList>
    </citation>
    <scope>NUCLEOTIDE SEQUENCE [LARGE SCALE GENOMIC DNA]</scope>
    <source>
        <strain>ATCC 13032 / DSM 20300 / JCM 1318 / BCRC 11384 / CCUG 27702 / LMG 3730 / NBRC 12168 / NCIMB 10025 / NRRL B-2784 / 534</strain>
    </source>
</reference>
<protein>
    <recommendedName>
        <fullName evidence="1">UPF0225 protein Cgl1438/cg1626</fullName>
    </recommendedName>
</protein>
<accession>Q8NQJ6</accession>
<sequence>MGKRCPCGTGLTYGECCYRFHSGEWVAPTAEALMRSRFTAFAVGNSQYLLDTWDPETRPSELGLDMGIDFYRLDILETTGGGPFDSTGTVKFQAFYKGLASGVQEEDSTFRKVNGAWVYSTGDVD</sequence>
<gene>
    <name type="ordered locus">Cgl1438</name>
    <name type="ordered locus">cg1626</name>
</gene>
<keyword id="KW-1185">Reference proteome</keyword>
<dbReference type="EMBL" id="BA000036">
    <property type="protein sequence ID" value="BAB98831.1"/>
    <property type="molecule type" value="Genomic_DNA"/>
</dbReference>
<dbReference type="EMBL" id="BX927152">
    <property type="protein sequence ID" value="CAF21447.1"/>
    <property type="status" value="ALT_INIT"/>
    <property type="molecule type" value="Genomic_DNA"/>
</dbReference>
<dbReference type="RefSeq" id="NP_600655.1">
    <property type="nucleotide sequence ID" value="NC_003450.3"/>
</dbReference>
<dbReference type="SMR" id="Q8NQJ6"/>
<dbReference type="STRING" id="196627.cg1626"/>
<dbReference type="KEGG" id="cgb:cg1626"/>
<dbReference type="KEGG" id="cgl:Cgl1438"/>
<dbReference type="PATRIC" id="fig|196627.13.peg.1405"/>
<dbReference type="eggNOG" id="COG3012">
    <property type="taxonomic scope" value="Bacteria"/>
</dbReference>
<dbReference type="HOGENOM" id="CLU_099590_2_0_11"/>
<dbReference type="OrthoDB" id="21421at2"/>
<dbReference type="BioCyc" id="CORYNE:G18NG-11021-MONOMER"/>
<dbReference type="Proteomes" id="UP000000582">
    <property type="component" value="Chromosome"/>
</dbReference>
<dbReference type="Proteomes" id="UP000001009">
    <property type="component" value="Chromosome"/>
</dbReference>
<dbReference type="Gene3D" id="3.10.450.50">
    <property type="match status" value="1"/>
</dbReference>
<dbReference type="HAMAP" id="MF_00612">
    <property type="entry name" value="UPF0225"/>
    <property type="match status" value="1"/>
</dbReference>
<dbReference type="InterPro" id="IPR032710">
    <property type="entry name" value="NTF2-like_dom_sf"/>
</dbReference>
<dbReference type="InterPro" id="IPR004027">
    <property type="entry name" value="SEC_C_motif"/>
</dbReference>
<dbReference type="InterPro" id="IPR023006">
    <property type="entry name" value="UPF0225"/>
</dbReference>
<dbReference type="InterPro" id="IPR048469">
    <property type="entry name" value="YchJ-like_M"/>
</dbReference>
<dbReference type="Pfam" id="PF02810">
    <property type="entry name" value="SEC-C"/>
    <property type="match status" value="1"/>
</dbReference>
<dbReference type="Pfam" id="PF17775">
    <property type="entry name" value="YchJ_M-like"/>
    <property type="match status" value="1"/>
</dbReference>
<dbReference type="SUPFAM" id="SSF54427">
    <property type="entry name" value="NTF2-like"/>
    <property type="match status" value="1"/>
</dbReference>
<feature type="chain" id="PRO_0000071801" description="UPF0225 protein Cgl1438/cg1626">
    <location>
        <begin position="1"/>
        <end position="125"/>
    </location>
</feature>